<name>DDRB_KLEM8</name>
<keyword id="KW-0002">3D-structure</keyword>
<keyword id="KW-0143">Chaperone</keyword>
<keyword id="KW-0903">Direct protein sequencing</keyword>
<keyword id="KW-0378">Hydrolase</keyword>
<keyword id="KW-0460">Magnesium</keyword>
<keyword id="KW-0479">Metal-binding</keyword>
<evidence type="ECO:0000269" key="1">
    <source>
    </source>
</evidence>
<evidence type="ECO:0000269" key="2">
    <source>
    </source>
</evidence>
<evidence type="ECO:0000269" key="3">
    <source>
    </source>
</evidence>
<evidence type="ECO:0000269" key="4">
    <source>
    </source>
</evidence>
<evidence type="ECO:0000269" key="5">
    <source>
    </source>
</evidence>
<evidence type="ECO:0000269" key="6">
    <source>
    </source>
</evidence>
<evidence type="ECO:0000269" key="7">
    <source>
    </source>
</evidence>
<evidence type="ECO:0000303" key="8">
    <source>
    </source>
</evidence>
<evidence type="ECO:0000303" key="9">
    <source>
    </source>
</evidence>
<evidence type="ECO:0000303" key="10">
    <source>
    </source>
</evidence>
<evidence type="ECO:0000303" key="11">
    <source>
    </source>
</evidence>
<evidence type="ECO:0000305" key="12"/>
<evidence type="ECO:0000305" key="13">
    <source>
    </source>
</evidence>
<evidence type="ECO:0007744" key="14">
    <source>
        <dbReference type="PDB" id="2D0O"/>
    </source>
</evidence>
<evidence type="ECO:0007744" key="15">
    <source>
        <dbReference type="PDB" id="2D0P"/>
    </source>
</evidence>
<evidence type="ECO:0007829" key="16">
    <source>
        <dbReference type="PDB" id="2D0O"/>
    </source>
</evidence>
<reference key="1">
    <citation type="journal article" date="1997" name="J. Biol. Chem.">
        <title>Characterization, sequencing, and expression of the genes encoding a reactivating factor for glycerol-inactivated adenosylcobalamin-dependent diol dehydratase.</title>
        <authorList>
            <person name="Mori K."/>
            <person name="Tobimatsu T."/>
            <person name="Hara T."/>
            <person name="Toraya T."/>
        </authorList>
    </citation>
    <scope>NUCLEOTIDE SEQUENCE [GENOMIC DNA]</scope>
    <scope>PROTEIN SEQUENCE OF 1-10</scope>
    <scope>FUNCTION OF DDR COMPLEX</scope>
    <scope>SUBUNIT</scope>
    <source>
        <strain>ATCC 8724 / DSM 4798 / JCM 20051 / NBRC 3318 / NRRL B-199 / KCTC 1686 / BUCSAV 143 / CCM 1901</strain>
    </source>
</reference>
<reference key="2">
    <citation type="journal article" date="2012" name="J. Bacteriol.">
        <title>Complete genome sequence of Klebsiella oxytoca KCTC 1686, used in production of 2,3-butanediol.</title>
        <authorList>
            <person name="Shin S.H."/>
            <person name="Kim S."/>
            <person name="Kim J.Y."/>
            <person name="Lee S."/>
            <person name="Um Y."/>
            <person name="Oh M.K."/>
            <person name="Kim Y.R."/>
            <person name="Lee J."/>
            <person name="Yang K.S."/>
        </authorList>
    </citation>
    <scope>NUCLEOTIDE SEQUENCE [LARGE SCALE GENOMIC DNA]</scope>
    <source>
        <strain>ATCC 8724 / DSM 4798 / JCM 20051 / NBRC 3318 / NRRL B-199 / KCTC 1686 / BUCSAV 143 / CCM 1901</strain>
    </source>
</reference>
<reference key="3">
    <citation type="journal article" date="1999" name="J. Biol. Chem.">
        <title>A reactivating factor for coenzyme B12-dependent diol dehydratase.</title>
        <authorList>
            <person name="Toraya T."/>
            <person name="Mori K."/>
        </authorList>
    </citation>
    <scope>PROTEIN SEQUENCE OF 1-10</scope>
    <scope>FUNCTION OF DDR COMPLEX</scope>
    <scope>SUBUNIT</scope>
    <source>
        <strain>ATCC 8724 / DSM 4798 / JCM 20051 / NBRC 3318 / NRRL B-199 / KCTC 1686 / BUCSAV 143 / CCM 1901</strain>
    </source>
</reference>
<reference key="4">
    <citation type="journal article" date="1999" name="Biochemistry">
        <title>Mechanism of reactivation of coenzyme B12-dependent diol dehydratase by a molecular chaperone-like reactivating factor.</title>
        <authorList>
            <person name="Mori K."/>
            <person name="Toraya T."/>
        </authorList>
    </citation>
    <scope>FUNCTION OF DDR COMPLEX</scope>
    <scope>REACTION MECHANISM</scope>
    <scope>INTERACTION OF DDR COMPLEX WITH DIOL DEHYDRATASE</scope>
    <scope>ATPASE ACTIVITY OF DDR COMPLEX</scope>
    <source>
        <strain>ATCC 8724 / DSM 4798 / JCM 20051 / NBRC 3318 / NRRL B-199 / KCTC 1686 / BUCSAV 143 / CCM 1901</strain>
    </source>
</reference>
<reference key="5">
    <citation type="journal article" date="2007" name="FEBS J.">
        <title>Molecular basis for specificities of reactivating factors for adenosylcobalamin-dependent diol and glycerol dehydratases.</title>
        <authorList>
            <person name="Kajiura H."/>
            <person name="Mori K."/>
            <person name="Shibata N."/>
            <person name="Toraya T."/>
        </authorList>
    </citation>
    <scope>FUNCTION OF DDR COMPLEX</scope>
    <scope>SUBUNIT</scope>
    <scope>SUBSTRATE SPECIFICITY OF DDR COMPLEX</scope>
</reference>
<reference key="6">
    <citation type="journal article" date="2008" name="J. Biochem.">
        <title>Mechanism-based inactivation of coenzyme B12-dependent diol dehydratase by 3-unsaturated 1,2-diols and thioglycerol.</title>
        <authorList>
            <person name="Toraya T."/>
            <person name="Tamura N."/>
            <person name="Watanabe T."/>
            <person name="Yamanishi M."/>
            <person name="Hieda N."/>
            <person name="Mori K."/>
        </authorList>
    </citation>
    <scope>FUNCTION OF DDR COMPLEX</scope>
</reference>
<reference key="7">
    <citation type="journal article" date="2010" name="FEBS J.">
        <title>Diol dehydratase-reactivating factor is a reactivase--evidence for multiple turnovers and subunit swapping with diol dehydratase.</title>
        <authorList>
            <person name="Mori K."/>
            <person name="Hosokawa Y."/>
            <person name="Yoshinaga T."/>
            <person name="Toraya T."/>
        </authorList>
    </citation>
    <scope>FUNCTION OF DDR COMPLEX</scope>
    <scope>COFACTOR</scope>
    <scope>BIOPHYSICOCHEMICAL PROPERTIES</scope>
    <scope>INTERACTION WITH DDRB AND DIOL DEHYDRATASE</scope>
</reference>
<reference evidence="14 15" key="8">
    <citation type="journal article" date="2005" name="Structure">
        <title>Release of a damaged cofactor from a coenzyme B12-dependent enzyme: X-ray structures of diol dehydratase-reactivating factor.</title>
        <authorList>
            <person name="Shibata N."/>
            <person name="Mori K."/>
            <person name="Hieda N."/>
            <person name="Higuchi Y."/>
            <person name="Yamanishi M."/>
            <person name="Toraya T."/>
        </authorList>
    </citation>
    <scope>X-RAY CRYSTALLOGRAPHY (2.00 ANGSTROMS) IN COMPLEX WITH DRRA AND MAGNESIUM</scope>
    <scope>COFACTOR</scope>
</reference>
<sequence length="125" mass="13620">MNGNHSAPAIAIAVIDGCDGLWREVLLGIEEEGIPFRLQHHPAGEVVDSAWQAARSSPLLVGIACDRHMLVVHYKNLPASAPLFTLMHHQDSQAHRNTGNNAARLVKGIPFRDLNSEATGEQQDE</sequence>
<accession>O68196</accession>
<accession>A0A0H3H783</accession>
<protein>
    <recommendedName>
        <fullName evidence="11">Diol dehydratase-reactivating factor small subunit</fullName>
        <shortName>DDR small subunit</shortName>
    </recommendedName>
    <alternativeName>
        <fullName evidence="9">Diol dehydratase-reactivase small subunit</fullName>
    </alternativeName>
    <alternativeName>
        <fullName evidence="8">Diol dehydratase-reactivating factor beta subunit</fullName>
        <shortName>DDR beta subunit</shortName>
        <shortName>DDRB</shortName>
    </alternativeName>
</protein>
<proteinExistence type="evidence at protein level"/>
<organism>
    <name type="scientific">Klebsiella michiganensis (strain ATCC 8724 / DSM 4798 / JCM 20051 / NBRC 3318 / NRRL B-199 / KCTC 1686 / BUCSAV 143 / CCM 1901)</name>
    <dbReference type="NCBI Taxonomy" id="1006551"/>
    <lineage>
        <taxon>Bacteria</taxon>
        <taxon>Pseudomonadati</taxon>
        <taxon>Pseudomonadota</taxon>
        <taxon>Gammaproteobacteria</taxon>
        <taxon>Enterobacterales</taxon>
        <taxon>Enterobacteriaceae</taxon>
        <taxon>Klebsiella/Raoultella group</taxon>
        <taxon>Klebsiella</taxon>
    </lineage>
</organism>
<feature type="chain" id="PRO_0000454162" description="Diol dehydratase-reactivating factor small subunit">
    <location>
        <begin position="1"/>
        <end position="125"/>
    </location>
</feature>
<feature type="binding site" evidence="2 14">
    <location>
        <position position="31"/>
    </location>
    <ligand>
        <name>Mg(2+)</name>
        <dbReference type="ChEBI" id="CHEBI:18420"/>
    </ligand>
</feature>
<feature type="strand" evidence="16">
    <location>
        <begin position="10"/>
        <end position="15"/>
    </location>
</feature>
<feature type="helix" evidence="16">
    <location>
        <begin position="19"/>
        <end position="22"/>
    </location>
</feature>
<feature type="helix" evidence="16">
    <location>
        <begin position="23"/>
        <end position="31"/>
    </location>
</feature>
<feature type="strand" evidence="16">
    <location>
        <begin position="36"/>
        <end position="43"/>
    </location>
</feature>
<feature type="helix" evidence="16">
    <location>
        <begin position="46"/>
        <end position="55"/>
    </location>
</feature>
<feature type="strand" evidence="16">
    <location>
        <begin position="60"/>
        <end position="65"/>
    </location>
</feature>
<feature type="strand" evidence="16">
    <location>
        <begin position="67"/>
        <end position="74"/>
    </location>
</feature>
<feature type="strand" evidence="16">
    <location>
        <begin position="83"/>
        <end position="87"/>
    </location>
</feature>
<feature type="helix" evidence="16">
    <location>
        <begin position="92"/>
        <end position="106"/>
    </location>
</feature>
<comment type="function">
    <text evidence="1 3 4 5 6 7">Small subunit of the diol dehydratase-reactivating factor (DDR), which reactivates suicidally inhibited adenosylcobalamin-dependent diol dehydratase (DD, pddA, pddB, pddC). DDR acts as a chaperone, reactivates inactivated DD holoenzyme in the presence of ATP, Mg(2+) and free adenosylcobalamin (AdoCbl), by mediating the exchange of the tightly bound damaged cofactor AdoCbl for a free intact one (PubMed:10529189, PubMed:17916188, PubMed:18586770, PubMed:21040475, PubMed:9405397, PubMed:9920879). Reactivation takes place in two steps: ADP-dependent cobalamin release, and ATP-dependent dissociation of the DD apoenzyme-DDR complex. DDR has weak ATPase activity which is required for DD reactivation (PubMed:10529189, PubMed:17916188, PubMed:21040475). Activates glycerol-inactivated, O2-inactivated holoenzyme and inactivated enzyme-cyanocobalamin complex (PubMed:9920879). Also reactivates glycerol-inactivated hologlycerol dehydratase, a DD isozyme (PubMed:17916188).</text>
</comment>
<comment type="catalytic activity">
    <reaction evidence="1 5">
        <text>ATP + H2O = ADP + phosphate + H(+)</text>
        <dbReference type="Rhea" id="RHEA:13065"/>
        <dbReference type="ChEBI" id="CHEBI:15377"/>
        <dbReference type="ChEBI" id="CHEBI:15378"/>
        <dbReference type="ChEBI" id="CHEBI:30616"/>
        <dbReference type="ChEBI" id="CHEBI:43474"/>
        <dbReference type="ChEBI" id="CHEBI:456216"/>
    </reaction>
</comment>
<comment type="cofactor">
    <cofactor evidence="2 5">
        <name>Mg(2+)</name>
        <dbReference type="ChEBI" id="CHEBI:18420"/>
    </cofactor>
    <text evidence="2 5">One Mg(2+)is bound by the enzyme, a second binds only to the beta-phosphate of DdrA-bound ADP (PubMed:16338403). Co(2+), Mn(2+) and Ni(2+) can substitute in vitro (PubMed:21040475).</text>
</comment>
<comment type="biophysicochemical properties">
    <kinetics>
        <KM evidence="5">6.9 mM for ATP, during activation and reactivation of glycerol-inactivated holoenzyme or enzyme-CN-Cbl complex</KM>
        <text evidence="5">kcat for enzyme-bound damaged AdoCbl is 0.14 min(-1), kcat for reactivation of CN-Cbl-inactivated enzyme is 0.27 min(-1).</text>
    </kinetics>
</comment>
<comment type="subunit">
    <text evidence="1 2 3 5 7 13">Component of the DDR complex, a heterotetramer of DdrA(2)/DdrB(2) (Probable) (PubMed:10529189, PubMed:16338403, PubMed:17916188, PubMed:21040475, PubMed:9920879). The DDR complex interacts with the diol dehydratase complex in the presence of ADP but not ATP (PubMed:10529189, PubMed:21040475).</text>
</comment>
<comment type="interaction">
    <interactant intactId="EBI-8491890">
        <id>O68196</id>
    </interactant>
    <interactant intactId="EBI-8491873">
        <id>O68195</id>
        <label>ddrA</label>
    </interactant>
    <organismsDiffer>false</organismsDiffer>
    <experiments>4</experiments>
</comment>
<comment type="similarity">
    <text evidence="12">Belongs to the DdrB/PduH family.</text>
</comment>
<dbReference type="EMBL" id="AF017781">
    <property type="protein sequence ID" value="AAC15872.1"/>
    <property type="molecule type" value="Genomic_DNA"/>
</dbReference>
<dbReference type="EMBL" id="CP003218">
    <property type="protein sequence ID" value="AEX02040.1"/>
    <property type="molecule type" value="Genomic_DNA"/>
</dbReference>
<dbReference type="PIR" id="T08598">
    <property type="entry name" value="T08598"/>
</dbReference>
<dbReference type="RefSeq" id="WP_014226639.1">
    <property type="nucleotide sequence ID" value="NC_016612.1"/>
</dbReference>
<dbReference type="PDB" id="2D0O">
    <property type="method" value="X-ray"/>
    <property type="resolution" value="2.00 A"/>
    <property type="chains" value="B/D=1-125"/>
</dbReference>
<dbReference type="PDB" id="2D0P">
    <property type="method" value="X-ray"/>
    <property type="resolution" value="3.00 A"/>
    <property type="chains" value="B/D=1-125"/>
</dbReference>
<dbReference type="PDBsum" id="2D0O"/>
<dbReference type="PDBsum" id="2D0P"/>
<dbReference type="SMR" id="O68196"/>
<dbReference type="DIP" id="DIP-48461N"/>
<dbReference type="IntAct" id="O68196">
    <property type="interactions" value="1"/>
</dbReference>
<dbReference type="MINT" id="O68196"/>
<dbReference type="KEGG" id="kox:KOX_01475"/>
<dbReference type="PATRIC" id="fig|1006551.4.peg.298"/>
<dbReference type="HOGENOM" id="CLU_139758_2_0_6"/>
<dbReference type="EvolutionaryTrace" id="O68196"/>
<dbReference type="PRO" id="PR:O68196"/>
<dbReference type="Proteomes" id="UP000007843">
    <property type="component" value="Chromosome"/>
</dbReference>
<dbReference type="GO" id="GO:0016787">
    <property type="term" value="F:hydrolase activity"/>
    <property type="evidence" value="ECO:0007669"/>
    <property type="project" value="UniProtKB-KW"/>
</dbReference>
<dbReference type="GO" id="GO:0046872">
    <property type="term" value="F:metal ion binding"/>
    <property type="evidence" value="ECO:0007669"/>
    <property type="project" value="UniProtKB-KW"/>
</dbReference>
<dbReference type="Gene3D" id="3.40.50.10150">
    <property type="entry name" value="B12-dependent dehydatase associated subunit"/>
    <property type="match status" value="1"/>
</dbReference>
<dbReference type="InterPro" id="IPR010254">
    <property type="entry name" value="B12-dep_deHydtase_bsu"/>
</dbReference>
<dbReference type="InterPro" id="IPR003208">
    <property type="entry name" value="Dehydtase/Dehydtase_re"/>
</dbReference>
<dbReference type="InterPro" id="IPR009192">
    <property type="entry name" value="Diol/glycerol_deHydtase_re_ssu"/>
</dbReference>
<dbReference type="Pfam" id="PF02288">
    <property type="entry name" value="Dehydratase_MU"/>
    <property type="match status" value="1"/>
</dbReference>
<dbReference type="PIRSF" id="PIRSF011503">
    <property type="entry name" value="DdrB_PduH"/>
    <property type="match status" value="1"/>
</dbReference>
<dbReference type="SUPFAM" id="SSF52968">
    <property type="entry name" value="B12-dependent dehydatase associated subunit"/>
    <property type="match status" value="1"/>
</dbReference>
<gene>
    <name evidence="11" type="primary">ddrB</name>
    <name evidence="10" type="synonym">pduH</name>
    <name type="ordered locus">KOX_01475</name>
</gene>